<feature type="chain" id="PRO_0000209289" description="UPF0250 protein BB0170">
    <location>
        <begin position="1"/>
        <end position="91"/>
    </location>
</feature>
<accession>Q7WR02</accession>
<organism>
    <name type="scientific">Bordetella bronchiseptica (strain ATCC BAA-588 / NCTC 13252 / RB50)</name>
    <name type="common">Alcaligenes bronchisepticus</name>
    <dbReference type="NCBI Taxonomy" id="257310"/>
    <lineage>
        <taxon>Bacteria</taxon>
        <taxon>Pseudomonadati</taxon>
        <taxon>Pseudomonadota</taxon>
        <taxon>Betaproteobacteria</taxon>
        <taxon>Burkholderiales</taxon>
        <taxon>Alcaligenaceae</taxon>
        <taxon>Bordetella</taxon>
    </lineage>
</organism>
<dbReference type="EMBL" id="BX640437">
    <property type="protein sequence ID" value="CAE30670.1"/>
    <property type="molecule type" value="Genomic_DNA"/>
</dbReference>
<dbReference type="RefSeq" id="WP_003807142.1">
    <property type="nucleotide sequence ID" value="NC_002927.3"/>
</dbReference>
<dbReference type="SMR" id="Q7WR02"/>
<dbReference type="KEGG" id="bbr:BB0170"/>
<dbReference type="eggNOG" id="COG2921">
    <property type="taxonomic scope" value="Bacteria"/>
</dbReference>
<dbReference type="HOGENOM" id="CLU_161438_1_2_4"/>
<dbReference type="Proteomes" id="UP000001027">
    <property type="component" value="Chromosome"/>
</dbReference>
<dbReference type="Gene3D" id="3.30.70.260">
    <property type="match status" value="1"/>
</dbReference>
<dbReference type="HAMAP" id="MF_00659">
    <property type="entry name" value="UPF0250"/>
    <property type="match status" value="1"/>
</dbReference>
<dbReference type="InterPro" id="IPR007454">
    <property type="entry name" value="UPF0250_YbeD-like"/>
</dbReference>
<dbReference type="InterPro" id="IPR027471">
    <property type="entry name" value="YbeD-like_sf"/>
</dbReference>
<dbReference type="NCBIfam" id="NF002533">
    <property type="entry name" value="PRK02047.1"/>
    <property type="match status" value="1"/>
</dbReference>
<dbReference type="PANTHER" id="PTHR38036">
    <property type="entry name" value="UPF0250 PROTEIN YBED"/>
    <property type="match status" value="1"/>
</dbReference>
<dbReference type="PANTHER" id="PTHR38036:SF1">
    <property type="entry name" value="UPF0250 PROTEIN YBED"/>
    <property type="match status" value="1"/>
</dbReference>
<dbReference type="Pfam" id="PF04359">
    <property type="entry name" value="DUF493"/>
    <property type="match status" value="1"/>
</dbReference>
<dbReference type="SUPFAM" id="SSF117991">
    <property type="entry name" value="YbeD/HP0495-like"/>
    <property type="match status" value="1"/>
</dbReference>
<evidence type="ECO:0000255" key="1">
    <source>
        <dbReference type="HAMAP-Rule" id="MF_00659"/>
    </source>
</evidence>
<proteinExistence type="inferred from homology"/>
<reference key="1">
    <citation type="journal article" date="2003" name="Nat. Genet.">
        <title>Comparative analysis of the genome sequences of Bordetella pertussis, Bordetella parapertussis and Bordetella bronchiseptica.</title>
        <authorList>
            <person name="Parkhill J."/>
            <person name="Sebaihia M."/>
            <person name="Preston A."/>
            <person name="Murphy L.D."/>
            <person name="Thomson N.R."/>
            <person name="Harris D.E."/>
            <person name="Holden M.T.G."/>
            <person name="Churcher C.M."/>
            <person name="Bentley S.D."/>
            <person name="Mungall K.L."/>
            <person name="Cerdeno-Tarraga A.-M."/>
            <person name="Temple L."/>
            <person name="James K.D."/>
            <person name="Harris B."/>
            <person name="Quail M.A."/>
            <person name="Achtman M."/>
            <person name="Atkin R."/>
            <person name="Baker S."/>
            <person name="Basham D."/>
            <person name="Bason N."/>
            <person name="Cherevach I."/>
            <person name="Chillingworth T."/>
            <person name="Collins M."/>
            <person name="Cronin A."/>
            <person name="Davis P."/>
            <person name="Doggett J."/>
            <person name="Feltwell T."/>
            <person name="Goble A."/>
            <person name="Hamlin N."/>
            <person name="Hauser H."/>
            <person name="Holroyd S."/>
            <person name="Jagels K."/>
            <person name="Leather S."/>
            <person name="Moule S."/>
            <person name="Norberczak H."/>
            <person name="O'Neil S."/>
            <person name="Ormond D."/>
            <person name="Price C."/>
            <person name="Rabbinowitsch E."/>
            <person name="Rutter S."/>
            <person name="Sanders M."/>
            <person name="Saunders D."/>
            <person name="Seeger K."/>
            <person name="Sharp S."/>
            <person name="Simmonds M."/>
            <person name="Skelton J."/>
            <person name="Squares R."/>
            <person name="Squares S."/>
            <person name="Stevens K."/>
            <person name="Unwin L."/>
            <person name="Whitehead S."/>
            <person name="Barrell B.G."/>
            <person name="Maskell D.J."/>
        </authorList>
    </citation>
    <scope>NUCLEOTIDE SEQUENCE [LARGE SCALE GENOMIC DNA]</scope>
    <source>
        <strain>ATCC BAA-588 / NCTC 13252 / RB50</strain>
    </source>
</reference>
<name>Y170_BORBR</name>
<sequence length="91" mass="10244">MHNIPPEESLIEYPSDFPIKVMGKQHPEFAQTLTEVVLQFDPAFDPASVEMRPSKGGNYMGLTFTVRATSREQLDSLYRALHGHPMVSIVL</sequence>
<protein>
    <recommendedName>
        <fullName evidence="1">UPF0250 protein BB0170</fullName>
    </recommendedName>
</protein>
<gene>
    <name type="ordered locus">BB0170</name>
</gene>
<comment type="similarity">
    <text evidence="1">Belongs to the UPF0250 family.</text>
</comment>